<comment type="function">
    <text evidence="1">Enhances the ribosomal termination-reinitiation event leading to the translation of major open reading frames on the polycistronic viral RNAs.</text>
</comment>
<comment type="subcellular location">
    <subcellularLocation>
        <location>Host cytoplasm</location>
    </subcellularLocation>
    <text>Found in cytoplasmic occlusion bodies.</text>
</comment>
<comment type="miscellaneous">
    <text>The inclusion bodies are the site of viral DNA synthesis, virion assembly and accumulation in the infected cell.</text>
</comment>
<comment type="similarity">
    <text evidence="3">Belongs to the caulimoviridae viroplasmin family.</text>
</comment>
<gene>
    <name type="ORF">ORF VI</name>
</gene>
<sequence length="522" mass="58286">MENIEKLLMQEKILMLELDLVRAKISLARANGSSQQGELSLHRETPEKEVAVHSALVTFTPTQVKAIPEQTAPGKESTNPLMASILPKDMNPVQTGTRLAVPSDFLRPHQGIPIPQKSELSSTVVPLRAESGIQHPHINYYVVYNGPHAGIYDDWGCTKAATNGVPGVAHKKFATITEARAAADAYTTRQQTDRLNFIPKGEAQLKPKSFAEALTSPPKQKAHWLTLGTKKPSSDPAPKEISFAPEITMDDFLYLYDLVRKFDGEGDDTMFTTDNEKISLFNFRKNANPQMVREAYAAGLIKTIYPSNNLQEIKYLPKKVKDAVKRFRTNCIKNTEKDIFLKIRSTIPVWTIQGLLHKPRQVIEIGVSKKVIPTESKAMESRIQIEDLTELAVKTGEQFIQSLLRLNDKKKIFVNMVEHDTLVYSKNIKETDSEDQRAIETFQQRVISGNLLGFHCPAICHFIMKTVEKEGGAYKCHHCDKGKAIVQDASADEGTTDKSGPPPTRSIVEKEDVPNTSSKQVD</sequence>
<name>IBMP_CAMVD</name>
<reference key="1">
    <citation type="journal article" date="1982" name="Gene">
        <title>Nucleotide sequence of DNA from an altered-virulence isolate D/H of the cauliflower mosaic virus.</title>
        <authorList>
            <person name="Balazs E."/>
            <person name="Guilley H."/>
            <person name="Jonard G."/>
            <person name="Richards K."/>
        </authorList>
    </citation>
    <scope>NUCLEOTIDE SEQUENCE [GENOMIC DNA]</scope>
</reference>
<evidence type="ECO:0000250" key="1">
    <source>
        <dbReference type="UniProtKB" id="P03558"/>
    </source>
</evidence>
<evidence type="ECO:0000256" key="2">
    <source>
        <dbReference type="SAM" id="MobiDB-lite"/>
    </source>
</evidence>
<evidence type="ECO:0000305" key="3"/>
<accession>P03557</accession>
<proteinExistence type="inferred from homology"/>
<keyword id="KW-1035">Host cytoplasm</keyword>
<keyword id="KW-0810">Translation regulation</keyword>
<dbReference type="EMBL" id="M10376">
    <property type="protein sequence ID" value="AAA46351.1"/>
    <property type="molecule type" value="Genomic_DNA"/>
</dbReference>
<dbReference type="PIR" id="A04160">
    <property type="entry name" value="QQCV6"/>
</dbReference>
<dbReference type="SMR" id="P03557"/>
<dbReference type="Proteomes" id="UP000008439">
    <property type="component" value="Genome"/>
</dbReference>
<dbReference type="GO" id="GO:0030430">
    <property type="term" value="C:host cell cytoplasm"/>
    <property type="evidence" value="ECO:0007669"/>
    <property type="project" value="UniProtKB-SubCell"/>
</dbReference>
<dbReference type="GO" id="GO:0006417">
    <property type="term" value="P:regulation of translation"/>
    <property type="evidence" value="ECO:0007669"/>
    <property type="project" value="UniProtKB-KW"/>
</dbReference>
<dbReference type="FunFam" id="3.40.970.10:FF:000003">
    <property type="entry name" value="Transactivator/viroplasmin protein"/>
    <property type="match status" value="1"/>
</dbReference>
<dbReference type="Gene3D" id="3.40.970.10">
    <property type="entry name" value="Ribonuclease H1, N-terminal domain"/>
    <property type="match status" value="1"/>
</dbReference>
<dbReference type="InterPro" id="IPR009027">
    <property type="entry name" value="Ribosomal_bL9/RNase_H1_N"/>
</dbReference>
<dbReference type="InterPro" id="IPR011320">
    <property type="entry name" value="RNase_H1_N"/>
</dbReference>
<dbReference type="InterPro" id="IPR037056">
    <property type="entry name" value="RNase_H1_N_sf"/>
</dbReference>
<dbReference type="Pfam" id="PF01693">
    <property type="entry name" value="Cauli_VI"/>
    <property type="match status" value="1"/>
</dbReference>
<dbReference type="SUPFAM" id="SSF55658">
    <property type="entry name" value="L9 N-domain-like"/>
    <property type="match status" value="1"/>
</dbReference>
<organism>
    <name type="scientific">Cauliflower mosaic virus (strain D/H)</name>
    <name type="common">CaMV</name>
    <dbReference type="NCBI Taxonomy" id="10645"/>
    <lineage>
        <taxon>Viruses</taxon>
        <taxon>Riboviria</taxon>
        <taxon>Pararnavirae</taxon>
        <taxon>Artverviricota</taxon>
        <taxon>Revtraviricetes</taxon>
        <taxon>Ortervirales</taxon>
        <taxon>Caulimoviridae</taxon>
        <taxon>Caulimovirus</taxon>
        <taxon>Caulimovirus tessellobrassicae</taxon>
    </lineage>
</organism>
<protein>
    <recommendedName>
        <fullName>Transactivator/viroplasmin protein</fullName>
        <shortName>Tav</shortName>
    </recommendedName>
    <alternativeName>
        <fullName>Inclusion body matrix protein</fullName>
    </alternativeName>
</protein>
<feature type="chain" id="PRO_0000222040" description="Transactivator/viroplasmin protein">
    <location>
        <begin position="1"/>
        <end position="522"/>
    </location>
</feature>
<feature type="region of interest" description="Disordered" evidence="2">
    <location>
        <begin position="488"/>
        <end position="522"/>
    </location>
</feature>
<organismHost>
    <name type="scientific">Arabidopsis thaliana</name>
    <name type="common">Mouse-ear cress</name>
    <dbReference type="NCBI Taxonomy" id="3702"/>
</organismHost>
<organismHost>
    <name type="scientific">Brassica</name>
    <dbReference type="NCBI Taxonomy" id="3705"/>
</organismHost>
<organismHost>
    <name type="scientific">Raphanus</name>
    <dbReference type="NCBI Taxonomy" id="3725"/>
</organismHost>